<reference key="1">
    <citation type="journal article" date="2001" name="Cell">
        <title>An mRNA cap binding protein, ABH1, modulates early abscisic acid signal transduction in Arabidopsis.</title>
        <authorList>
            <person name="Hugouvieux V."/>
            <person name="Kwak J.M."/>
            <person name="Schroeder J.I."/>
        </authorList>
    </citation>
    <scope>NUCLEOTIDE SEQUENCE [MRNA]</scope>
    <scope>FUNCTION</scope>
    <scope>DISRUPTION PHENOTYPE</scope>
    <scope>INTERACTION WITH CBP20</scope>
    <source>
        <strain>cv. Columbia</strain>
    </source>
</reference>
<reference key="2">
    <citation type="journal article" date="2002" name="Gene">
        <title>Cloning and characterization of two subunits of Arabidopsis thaliana nuclear cap-binding complex.</title>
        <authorList>
            <person name="Kmieciak M."/>
            <person name="Simpson C.G."/>
            <person name="Lewandowska D."/>
            <person name="Brown J.W.S."/>
            <person name="Jarmolowski A."/>
        </authorList>
    </citation>
    <scope>NUCLEOTIDE SEQUENCE [MRNA]</scope>
    <scope>TISSUE SPECIFICITY</scope>
    <source>
        <strain>cv. Columbia</strain>
    </source>
</reference>
<reference key="3">
    <citation type="journal article" date="1999" name="Nature">
        <title>Sequence and analysis of chromosome 2 of the plant Arabidopsis thaliana.</title>
        <authorList>
            <person name="Lin X."/>
            <person name="Kaul S."/>
            <person name="Rounsley S.D."/>
            <person name="Shea T.P."/>
            <person name="Benito M.-I."/>
            <person name="Town C.D."/>
            <person name="Fujii C.Y."/>
            <person name="Mason T.M."/>
            <person name="Bowman C.L."/>
            <person name="Barnstead M.E."/>
            <person name="Feldblyum T.V."/>
            <person name="Buell C.R."/>
            <person name="Ketchum K.A."/>
            <person name="Lee J.J."/>
            <person name="Ronning C.M."/>
            <person name="Koo H.L."/>
            <person name="Moffat K.S."/>
            <person name="Cronin L.A."/>
            <person name="Shen M."/>
            <person name="Pai G."/>
            <person name="Van Aken S."/>
            <person name="Umayam L."/>
            <person name="Tallon L.J."/>
            <person name="Gill J.E."/>
            <person name="Adams M.D."/>
            <person name="Carrera A.J."/>
            <person name="Creasy T.H."/>
            <person name="Goodman H.M."/>
            <person name="Somerville C.R."/>
            <person name="Copenhaver G.P."/>
            <person name="Preuss D."/>
            <person name="Nierman W.C."/>
            <person name="White O."/>
            <person name="Eisen J.A."/>
            <person name="Salzberg S.L."/>
            <person name="Fraser C.M."/>
            <person name="Venter J.C."/>
        </authorList>
    </citation>
    <scope>NUCLEOTIDE SEQUENCE [LARGE SCALE GENOMIC DNA]</scope>
    <source>
        <strain>cv. Columbia</strain>
    </source>
</reference>
<reference key="4">
    <citation type="journal article" date="2017" name="Plant J.">
        <title>Araport11: a complete reannotation of the Arabidopsis thaliana reference genome.</title>
        <authorList>
            <person name="Cheng C.Y."/>
            <person name="Krishnakumar V."/>
            <person name="Chan A.P."/>
            <person name="Thibaud-Nissen F."/>
            <person name="Schobel S."/>
            <person name="Town C.D."/>
        </authorList>
    </citation>
    <scope>GENOME REANNOTATION</scope>
    <source>
        <strain>cv. Columbia</strain>
    </source>
</reference>
<reference key="5">
    <citation type="journal article" date="2003" name="Science">
        <title>Empirical analysis of transcriptional activity in the Arabidopsis genome.</title>
        <authorList>
            <person name="Yamada K."/>
            <person name="Lim J."/>
            <person name="Dale J.M."/>
            <person name="Chen H."/>
            <person name="Shinn P."/>
            <person name="Palm C.J."/>
            <person name="Southwick A.M."/>
            <person name="Wu H.C."/>
            <person name="Kim C.J."/>
            <person name="Nguyen M."/>
            <person name="Pham P.K."/>
            <person name="Cheuk R.F."/>
            <person name="Karlin-Newmann G."/>
            <person name="Liu S.X."/>
            <person name="Lam B."/>
            <person name="Sakano H."/>
            <person name="Wu T."/>
            <person name="Yu G."/>
            <person name="Miranda M."/>
            <person name="Quach H.L."/>
            <person name="Tripp M."/>
            <person name="Chang C.H."/>
            <person name="Lee J.M."/>
            <person name="Toriumi M.J."/>
            <person name="Chan M.M."/>
            <person name="Tang C.C."/>
            <person name="Onodera C.S."/>
            <person name="Deng J.M."/>
            <person name="Akiyama K."/>
            <person name="Ansari Y."/>
            <person name="Arakawa T."/>
            <person name="Banh J."/>
            <person name="Banno F."/>
            <person name="Bowser L."/>
            <person name="Brooks S.Y."/>
            <person name="Carninci P."/>
            <person name="Chao Q."/>
            <person name="Choy N."/>
            <person name="Enju A."/>
            <person name="Goldsmith A.D."/>
            <person name="Gurjal M."/>
            <person name="Hansen N.F."/>
            <person name="Hayashizaki Y."/>
            <person name="Johnson-Hopson C."/>
            <person name="Hsuan V.W."/>
            <person name="Iida K."/>
            <person name="Karnes M."/>
            <person name="Khan S."/>
            <person name="Koesema E."/>
            <person name="Ishida J."/>
            <person name="Jiang P.X."/>
            <person name="Jones T."/>
            <person name="Kawai J."/>
            <person name="Kamiya A."/>
            <person name="Meyers C."/>
            <person name="Nakajima M."/>
            <person name="Narusaka M."/>
            <person name="Seki M."/>
            <person name="Sakurai T."/>
            <person name="Satou M."/>
            <person name="Tamse R."/>
            <person name="Vaysberg M."/>
            <person name="Wallender E.K."/>
            <person name="Wong C."/>
            <person name="Yamamura Y."/>
            <person name="Yuan S."/>
            <person name="Shinozaki K."/>
            <person name="Davis R.W."/>
            <person name="Theologis A."/>
            <person name="Ecker J.R."/>
        </authorList>
    </citation>
    <scope>NUCLEOTIDE SEQUENCE [LARGE SCALE MRNA]</scope>
    <source>
        <strain>cv. Columbia</strain>
    </source>
</reference>
<reference key="6">
    <citation type="journal article" date="2002" name="Plant Physiol.">
        <title>Localization, ion channel regulation, and genetic interactions during abscisic acid signaling of the nuclear mRNA cap-binding protein, ABH1.</title>
        <authorList>
            <person name="Hugouvieux V."/>
            <person name="Murata Y."/>
            <person name="Young J.J."/>
            <person name="Kwak J.M."/>
            <person name="Mackesy D.Z."/>
            <person name="Schroeder J.I."/>
        </authorList>
    </citation>
    <scope>FUNCTION</scope>
    <scope>SUBCELLULAR LOCATION</scope>
    <scope>TISSUE SPECIFICITY</scope>
</reference>
<reference key="7">
    <citation type="journal article" date="2008" name="Acta Biochim. Pol.">
        <title>The nuclear cap-binding protein complex is not essential for nonsense-mediated mRNA decay (NMD) in plants.</title>
        <authorList>
            <person name="Dzikiewicz-Krawczyk A."/>
            <person name="Piontek P."/>
            <person name="Szweykowska-Kulinska Z."/>
            <person name="Jarmolowski A."/>
        </authorList>
    </citation>
    <scope>LACK OF FUNCTION IN NMD</scope>
</reference>
<reference key="8">
    <citation type="journal article" date="2008" name="Dev. Cell">
        <title>A link between RNA metabolism and silencing affecting Arabidopsis development.</title>
        <authorList>
            <person name="Gregory B.D."/>
            <person name="O'Malley R.C."/>
            <person name="Lister R."/>
            <person name="Urich M.A."/>
            <person name="Tonti-Filippini J."/>
            <person name="Chen H."/>
            <person name="Millar A.H."/>
            <person name="Ecker J.R."/>
        </authorList>
    </citation>
    <scope>FUNCTION</scope>
</reference>
<reference key="9">
    <citation type="journal article" date="2008" name="Plant Cell Physiol.">
        <title>Two cap-binding proteins CBP20 and CBP80 are involved in processing primary MicroRNAs.</title>
        <authorList>
            <person name="Kim S."/>
            <person name="Yang J.-Y."/>
            <person name="Xu J."/>
            <person name="Jang I.-C."/>
            <person name="Prigge M.J."/>
            <person name="Chua N.-H."/>
        </authorList>
    </citation>
    <scope>FUNCTION</scope>
</reference>
<reference key="10">
    <citation type="journal article" date="2008" name="Proc. Natl. Acad. Sci. U.S.A.">
        <title>Dual roles of the nuclear cap-binding complex and SERRATE in pre-mRNA splicing and microRNA processing in Arabidopsis thaliana.</title>
        <authorList>
            <person name="Laubinger S."/>
            <person name="Sachsenberg T."/>
            <person name="Zeller G."/>
            <person name="Busch W."/>
            <person name="Lohmann J.U."/>
            <person name="Raetsch G."/>
            <person name="Weigel D."/>
        </authorList>
    </citation>
    <scope>FUNCTION</scope>
</reference>
<reference key="11">
    <citation type="journal article" date="2009" name="Plant J.">
        <title>The Arabidopsis CBP20 targets the cap-binding complex to the nucleus, and is stabilized by CBP80.</title>
        <authorList>
            <person name="Kierzkowski D."/>
            <person name="Kmieciak M."/>
            <person name="Piontek P."/>
            <person name="Wojtaszek P."/>
            <person name="Szweykowska-Kulinska Z."/>
            <person name="Jarmolowski A."/>
        </authorList>
    </citation>
    <scope>INTERACTION WITH CBP20</scope>
</reference>
<feature type="chain" id="PRO_0000385246" description="Nuclear cap-binding protein subunit 1">
    <location>
        <begin position="1"/>
        <end position="848"/>
    </location>
</feature>
<feature type="domain" description="MIF4G">
    <location>
        <begin position="8"/>
        <end position="228"/>
    </location>
</feature>
<feature type="region of interest" description="Disordered" evidence="1">
    <location>
        <begin position="767"/>
        <end position="786"/>
    </location>
</feature>
<feature type="sequence conflict" description="In Ref. 5; AAN18216/AAL38378." evidence="9" ref="5">
    <original>V</original>
    <variation>M</variation>
    <location>
        <position position="625"/>
    </location>
</feature>
<evidence type="ECO:0000256" key="1">
    <source>
        <dbReference type="SAM" id="MobiDB-lite"/>
    </source>
</evidence>
<evidence type="ECO:0000269" key="2">
    <source>
    </source>
</evidence>
<evidence type="ECO:0000269" key="3">
    <source>
    </source>
</evidence>
<evidence type="ECO:0000269" key="4">
    <source>
    </source>
</evidence>
<evidence type="ECO:0000269" key="5">
    <source>
    </source>
</evidence>
<evidence type="ECO:0000269" key="6">
    <source>
    </source>
</evidence>
<evidence type="ECO:0000269" key="7">
    <source>
    </source>
</evidence>
<evidence type="ECO:0000269" key="8">
    <source>
    </source>
</evidence>
<evidence type="ECO:0000305" key="9"/>
<dbReference type="EMBL" id="AF272891">
    <property type="protein sequence ID" value="AAK91588.1"/>
    <property type="molecule type" value="mRNA"/>
</dbReference>
<dbReference type="EMBL" id="AF268377">
    <property type="protein sequence ID" value="AAF76167.1"/>
    <property type="molecule type" value="mRNA"/>
</dbReference>
<dbReference type="EMBL" id="AC007063">
    <property type="protein sequence ID" value="AAD22677.2"/>
    <property type="molecule type" value="Genomic_DNA"/>
</dbReference>
<dbReference type="EMBL" id="CP002685">
    <property type="protein sequence ID" value="AEC06238.1"/>
    <property type="molecule type" value="Genomic_DNA"/>
</dbReference>
<dbReference type="EMBL" id="AY064960">
    <property type="protein sequence ID" value="AAL38378.1"/>
    <property type="molecule type" value="mRNA"/>
</dbReference>
<dbReference type="EMBL" id="BT000650">
    <property type="protein sequence ID" value="AAN18216.1"/>
    <property type="molecule type" value="mRNA"/>
</dbReference>
<dbReference type="PIR" id="C84508">
    <property type="entry name" value="C84508"/>
</dbReference>
<dbReference type="RefSeq" id="NP_565356.1">
    <property type="nucleotide sequence ID" value="NM_126934.4"/>
</dbReference>
<dbReference type="SMR" id="Q9SIU2"/>
<dbReference type="BioGRID" id="1201">
    <property type="interactions" value="13"/>
</dbReference>
<dbReference type="ComplexPortal" id="CPX-1334">
    <property type="entry name" value="Nuclear cap-binding complex"/>
</dbReference>
<dbReference type="FunCoup" id="Q9SIU2">
    <property type="interactions" value="4780"/>
</dbReference>
<dbReference type="IntAct" id="Q9SIU2">
    <property type="interactions" value="1"/>
</dbReference>
<dbReference type="STRING" id="3702.Q9SIU2"/>
<dbReference type="iPTMnet" id="Q9SIU2"/>
<dbReference type="PaxDb" id="3702-AT2G13540.1"/>
<dbReference type="ProteomicsDB" id="251141"/>
<dbReference type="EnsemblPlants" id="AT2G13540.1">
    <property type="protein sequence ID" value="AT2G13540.1"/>
    <property type="gene ID" value="AT2G13540"/>
</dbReference>
<dbReference type="GeneID" id="815840"/>
<dbReference type="Gramene" id="AT2G13540.1">
    <property type="protein sequence ID" value="AT2G13540.1"/>
    <property type="gene ID" value="AT2G13540"/>
</dbReference>
<dbReference type="KEGG" id="ath:AT2G13540"/>
<dbReference type="Araport" id="AT2G13540"/>
<dbReference type="TAIR" id="AT2G13540">
    <property type="gene designation" value="ABH1"/>
</dbReference>
<dbReference type="eggNOG" id="KOG1104">
    <property type="taxonomic scope" value="Eukaryota"/>
</dbReference>
<dbReference type="HOGENOM" id="CLU_013207_1_0_1"/>
<dbReference type="InParanoid" id="Q9SIU2"/>
<dbReference type="OMA" id="CAAEGLM"/>
<dbReference type="PhylomeDB" id="Q9SIU2"/>
<dbReference type="CD-CODE" id="4299E36E">
    <property type="entry name" value="Nucleolus"/>
</dbReference>
<dbReference type="PRO" id="PR:Q9SIU2"/>
<dbReference type="Proteomes" id="UP000006548">
    <property type="component" value="Chromosome 2"/>
</dbReference>
<dbReference type="ExpressionAtlas" id="Q9SIU2">
    <property type="expression patterns" value="baseline and differential"/>
</dbReference>
<dbReference type="GO" id="GO:0005739">
    <property type="term" value="C:mitochondrion"/>
    <property type="evidence" value="ECO:0007005"/>
    <property type="project" value="TAIR"/>
</dbReference>
<dbReference type="GO" id="GO:0005846">
    <property type="term" value="C:nuclear cap binding complex"/>
    <property type="evidence" value="ECO:0000353"/>
    <property type="project" value="ComplexPortal"/>
</dbReference>
<dbReference type="GO" id="GO:0005634">
    <property type="term" value="C:nucleus"/>
    <property type="evidence" value="ECO:0000314"/>
    <property type="project" value="TAIR"/>
</dbReference>
<dbReference type="GO" id="GO:0000339">
    <property type="term" value="F:RNA cap binding"/>
    <property type="evidence" value="ECO:0000314"/>
    <property type="project" value="TAIR"/>
</dbReference>
<dbReference type="GO" id="GO:0006370">
    <property type="term" value="P:7-methylguanosine mRNA capping"/>
    <property type="evidence" value="ECO:0007669"/>
    <property type="project" value="UniProtKB-KW"/>
</dbReference>
<dbReference type="GO" id="GO:1901527">
    <property type="term" value="P:abscisic acid-activated signaling pathway involved in stomatal movement"/>
    <property type="evidence" value="ECO:0000314"/>
    <property type="project" value="ComplexPortal"/>
</dbReference>
<dbReference type="GO" id="GO:0000380">
    <property type="term" value="P:alternative mRNA splicing, via spliceosome"/>
    <property type="evidence" value="ECO:0000315"/>
    <property type="project" value="ComplexPortal"/>
</dbReference>
<dbReference type="GO" id="GO:0051607">
    <property type="term" value="P:defense response to virus"/>
    <property type="evidence" value="ECO:0000315"/>
    <property type="project" value="TAIR"/>
</dbReference>
<dbReference type="GO" id="GO:0048574">
    <property type="term" value="P:long-day photoperiodism, flowering"/>
    <property type="evidence" value="ECO:0000315"/>
    <property type="project" value="TAIR"/>
</dbReference>
<dbReference type="GO" id="GO:0035195">
    <property type="term" value="P:miRNA-mediated post-transcriptional gene silencing"/>
    <property type="evidence" value="ECO:0000303"/>
    <property type="project" value="ComplexPortal"/>
</dbReference>
<dbReference type="GO" id="GO:0006406">
    <property type="term" value="P:mRNA export from nucleus"/>
    <property type="evidence" value="ECO:0000303"/>
    <property type="project" value="ComplexPortal"/>
</dbReference>
<dbReference type="GO" id="GO:0000398">
    <property type="term" value="P:mRNA splicing, via spliceosome"/>
    <property type="evidence" value="ECO:0000303"/>
    <property type="project" value="ComplexPortal"/>
</dbReference>
<dbReference type="GO" id="GO:0042789">
    <property type="term" value="P:mRNA transcription by RNA polymerase II"/>
    <property type="evidence" value="ECO:0000303"/>
    <property type="project" value="ComplexPortal"/>
</dbReference>
<dbReference type="GO" id="GO:0000956">
    <property type="term" value="P:nuclear-transcribed mRNA catabolic process"/>
    <property type="evidence" value="ECO:0000303"/>
    <property type="project" value="ComplexPortal"/>
</dbReference>
<dbReference type="GO" id="GO:0031053">
    <property type="term" value="P:primary miRNA processing"/>
    <property type="evidence" value="ECO:0000315"/>
    <property type="project" value="ComplexPortal"/>
</dbReference>
<dbReference type="GO" id="GO:0009737">
    <property type="term" value="P:response to abscisic acid"/>
    <property type="evidence" value="ECO:0000315"/>
    <property type="project" value="TAIR"/>
</dbReference>
<dbReference type="GO" id="GO:0000394">
    <property type="term" value="P:RNA splicing, via endonucleolytic cleavage and ligation"/>
    <property type="evidence" value="ECO:0000315"/>
    <property type="project" value="TAIR"/>
</dbReference>
<dbReference type="FunFam" id="1.25.40.180:FF:000029">
    <property type="entry name" value="Nuclear cap-binding protein"/>
    <property type="match status" value="1"/>
</dbReference>
<dbReference type="FunFam" id="1.25.40.180:FF:000040">
    <property type="entry name" value="Nuclear cap-binding protein subunit 1"/>
    <property type="match status" value="1"/>
</dbReference>
<dbReference type="Gene3D" id="1.25.40.180">
    <property type="match status" value="3"/>
</dbReference>
<dbReference type="InterPro" id="IPR016024">
    <property type="entry name" value="ARM-type_fold"/>
</dbReference>
<dbReference type="InterPro" id="IPR027159">
    <property type="entry name" value="CBP80"/>
</dbReference>
<dbReference type="InterPro" id="IPR015172">
    <property type="entry name" value="MIF4G-like_typ-1"/>
</dbReference>
<dbReference type="InterPro" id="IPR015174">
    <property type="entry name" value="MIF4G-like_typ-2"/>
</dbReference>
<dbReference type="InterPro" id="IPR003890">
    <property type="entry name" value="MIF4G-like_typ-3"/>
</dbReference>
<dbReference type="PANTHER" id="PTHR12412">
    <property type="entry name" value="CAP BINDING PROTEIN"/>
    <property type="match status" value="1"/>
</dbReference>
<dbReference type="PANTHER" id="PTHR12412:SF2">
    <property type="entry name" value="NUCLEAR CAP-BINDING PROTEIN SUBUNIT 1"/>
    <property type="match status" value="1"/>
</dbReference>
<dbReference type="Pfam" id="PF02854">
    <property type="entry name" value="MIF4G"/>
    <property type="match status" value="1"/>
</dbReference>
<dbReference type="Pfam" id="PF09088">
    <property type="entry name" value="MIF4G_like"/>
    <property type="match status" value="1"/>
</dbReference>
<dbReference type="Pfam" id="PF09090">
    <property type="entry name" value="MIF4G_like_2"/>
    <property type="match status" value="1"/>
</dbReference>
<dbReference type="SMART" id="SM00543">
    <property type="entry name" value="MIF4G"/>
    <property type="match status" value="1"/>
</dbReference>
<dbReference type="SUPFAM" id="SSF48371">
    <property type="entry name" value="ARM repeat"/>
    <property type="match status" value="3"/>
</dbReference>
<gene>
    <name type="primary">ABH1</name>
    <name type="synonym">CBP80</name>
    <name type="synonym">ENS</name>
    <name type="ordered locus">At2g13540</name>
    <name type="ORF">T10F5.8</name>
</gene>
<keyword id="KW-0963">Cytoplasm</keyword>
<keyword id="KW-0506">mRNA capping</keyword>
<keyword id="KW-0507">mRNA processing</keyword>
<keyword id="KW-0508">mRNA splicing</keyword>
<keyword id="KW-0539">Nucleus</keyword>
<keyword id="KW-1185">Reference proteome</keyword>
<keyword id="KW-0943">RNA-mediated gene silencing</keyword>
<organism>
    <name type="scientific">Arabidopsis thaliana</name>
    <name type="common">Mouse-ear cress</name>
    <dbReference type="NCBI Taxonomy" id="3702"/>
    <lineage>
        <taxon>Eukaryota</taxon>
        <taxon>Viridiplantae</taxon>
        <taxon>Streptophyta</taxon>
        <taxon>Embryophyta</taxon>
        <taxon>Tracheophyta</taxon>
        <taxon>Spermatophyta</taxon>
        <taxon>Magnoliopsida</taxon>
        <taxon>eudicotyledons</taxon>
        <taxon>Gunneridae</taxon>
        <taxon>Pentapetalae</taxon>
        <taxon>rosids</taxon>
        <taxon>malvids</taxon>
        <taxon>Brassicales</taxon>
        <taxon>Brassicaceae</taxon>
        <taxon>Camelineae</taxon>
        <taxon>Arabidopsis</taxon>
    </lineage>
</organism>
<sequence>MSNWKTLLLRIGEKGPEYGTSSDYKDHIETCFGVIRREIERSGDQVLPFLLQCAEQLPHKIPLYGTLIGLLNLENEDFVQKLVESVHANFQVALDSGNCNSIRILLRFMTSLLCSKVIQPASLIVVFETLLSSAATTVDEEKGNPSWQPQADFYVICILSSLPWGGSELAEQVPDEIERVLVGIQAYLSIRKNSSTSGLNFFHNGEFESSLAEKDFVEDLLDRIQSLASNGWKLESVPRPHLSFEAQLVAGKFHELRPIKCMEQPSPPSDHSRAYSGKQKHDALTRYPQRIRRLNIFPANKMEDVQPIDRFVVEEYLLDVLFYLNGCRKECASYMANLPVTFRYEYLMAETLFSQILLLPQPPFKTLYYTLVIMDLCKALPGAFPAVVAGAVRALFEKISDLDMESRTRLILWFSHHLSNFQFIWPWEEWAFVLDLPKWAPKRVFVQEILQREVRLSYWDKIKQSIENATALEELLPPKAGPNFMYSLEEGKEKTEEQQLSAELSRKVKEKQTARDMIVWIEETIYPVHGFEVTLTIVVQTLLDIGSKSFTHLVTVLERYGQVFSKLCPDNDKQVMLLSQVSTYWKNNVQMTAVAIDRMMGYRLVSNQAIVRWVFSPENVDQFHVSDQPWEILGNALNKTYNRISDLRKDISNITKNVLVAEKASANARVELEAAESKLSLVEGEPVLGENPAKMKRLKSTVEKTGEAELSLRESLEAKEALLNRALSETEVLLLLLFQSFLGVLKERLPDPTKVRSVQDLKSIGAEDDKPSAMDVDSENGNPKKSCEVGEREQWCLSTLGYLTAFTRQYASEIWPHMEKLESEVFSGEDVHPLFLQAISSALQFPLH</sequence>
<protein>
    <recommendedName>
        <fullName>Nuclear cap-binding protein subunit 1</fullName>
    </recommendedName>
    <alternativeName>
        <fullName>80 kDa nuclear cap-binding protein</fullName>
        <shortName>AtCBP80</shortName>
        <shortName>NCBP 80 kDa subunit</shortName>
    </alternativeName>
    <alternativeName>
        <fullName>Abscisic acid-hypersensitive protein 1</fullName>
        <shortName>ABA-hypersensitive protein 1</shortName>
    </alternativeName>
    <alternativeName>
        <fullName>Protein ENSALADA</fullName>
    </alternativeName>
</protein>
<comment type="function">
    <text evidence="2 4 5 6 7">Component of the cap-binding complex (CBC), which binds cotranscriptionally to the 5'-cap of pre-mRNAs and is involved in various processes such as pre-mRNA splicing and RNA-mediated gene silencing (RNAi) by microRNAs (miRNAs). The CBC complex is involved in miRNA-mediated RNA interference and is required for primary miRNA processing. In the CBC complex, ABH1/CBP80 does not bind directly capped RNAs (m7GpppG-capped RNA) but is required to stabilize the movement of the N-terminal loop of CBP20 and lock the CBC into a high affinity cap-binding state with the cap structure. Involved in flowering regulation, possibly by regulating pre-mRNA splicing of FLC gene. Acts as a negative regulator of abscisic acid signaling in guard cells.</text>
</comment>
<comment type="subunit">
    <text evidence="2 8">Component of the nuclear cap-binding complex (CBC), a heterodimer composed of ABH1/CBP80 and CBP20 that interacts with m7GpppG-capped RNA.</text>
</comment>
<comment type="interaction">
    <interactant intactId="EBI-2359412">
        <id>Q9SIU2</id>
    </interactant>
    <interactant intactId="EBI-2354070">
        <id>Q9XFD1</id>
        <label>CBP20</label>
    </interactant>
    <organismsDiffer>false</organismsDiffer>
    <experiments>7</experiments>
</comment>
<comment type="subcellular location">
    <subcellularLocation>
        <location evidence="4">Nucleus</location>
    </subcellularLocation>
    <subcellularLocation>
        <location evidence="4">Cytoplasm</location>
    </subcellularLocation>
    <text>Predominantly nuclear.</text>
</comment>
<comment type="tissue specificity">
    <text evidence="3 4">Expressed in all tissues analyzed, including roots, stems, leaves and flowers.</text>
</comment>
<comment type="disruption phenotype">
    <text evidence="2">Stomatal closing and reduced wilting during drought due to abscisic acid-hypersensitivity in early abscisic acid signaling. Abscisic acid-hypersensitive cytosolic calcium increases in guard cells.</text>
</comment>
<comment type="miscellaneous">
    <text>In contrast to other organisms, the CBC complex is apparently not essential for nonsense-mediated mRNA decay (NMD) in Arabidopsis.</text>
</comment>
<comment type="similarity">
    <text evidence="9">Belongs to the NCBP1 family.</text>
</comment>
<proteinExistence type="evidence at protein level"/>
<name>NCBP1_ARATH</name>
<accession>Q9SIU2</accession>
<accession>Q8VZH3</accession>
<accession>Q9LKN6</accession>